<comment type="similarity">
    <text evidence="1">Belongs to the bacterial ribosomal protein bS16 family.</text>
</comment>
<keyword id="KW-1185">Reference proteome</keyword>
<keyword id="KW-0687">Ribonucleoprotein</keyword>
<keyword id="KW-0689">Ribosomal protein</keyword>
<protein>
    <recommendedName>
        <fullName evidence="1">Small ribosomal subunit protein bS16</fullName>
    </recommendedName>
    <alternativeName>
        <fullName evidence="2">30S ribosomal protein S16</fullName>
    </alternativeName>
</protein>
<organism>
    <name type="scientific">Pasteurella multocida (strain Pm70)</name>
    <dbReference type="NCBI Taxonomy" id="272843"/>
    <lineage>
        <taxon>Bacteria</taxon>
        <taxon>Pseudomonadati</taxon>
        <taxon>Pseudomonadota</taxon>
        <taxon>Gammaproteobacteria</taxon>
        <taxon>Pasteurellales</taxon>
        <taxon>Pasteurellaceae</taxon>
        <taxon>Pasteurella</taxon>
    </lineage>
</organism>
<evidence type="ECO:0000255" key="1">
    <source>
        <dbReference type="HAMAP-Rule" id="MF_00385"/>
    </source>
</evidence>
<evidence type="ECO:0000305" key="2"/>
<dbReference type="EMBL" id="AE004439">
    <property type="status" value="NOT_ANNOTATED_CDS"/>
    <property type="molecule type" value="Genomic_DNA"/>
</dbReference>
<dbReference type="RefSeq" id="WP_005717779.1">
    <property type="nucleotide sequence ID" value="NC_002663.1"/>
</dbReference>
<dbReference type="SMR" id="P58123"/>
<dbReference type="OrthoDB" id="9807878at2"/>
<dbReference type="Proteomes" id="UP000000809">
    <property type="component" value="Chromosome"/>
</dbReference>
<dbReference type="GO" id="GO:0005737">
    <property type="term" value="C:cytoplasm"/>
    <property type="evidence" value="ECO:0007669"/>
    <property type="project" value="UniProtKB-ARBA"/>
</dbReference>
<dbReference type="GO" id="GO:0015935">
    <property type="term" value="C:small ribosomal subunit"/>
    <property type="evidence" value="ECO:0007669"/>
    <property type="project" value="TreeGrafter"/>
</dbReference>
<dbReference type="GO" id="GO:0003735">
    <property type="term" value="F:structural constituent of ribosome"/>
    <property type="evidence" value="ECO:0007669"/>
    <property type="project" value="InterPro"/>
</dbReference>
<dbReference type="GO" id="GO:0006412">
    <property type="term" value="P:translation"/>
    <property type="evidence" value="ECO:0007669"/>
    <property type="project" value="UniProtKB-UniRule"/>
</dbReference>
<dbReference type="FunFam" id="3.30.1320.10:FF:000001">
    <property type="entry name" value="30S ribosomal protein S16"/>
    <property type="match status" value="1"/>
</dbReference>
<dbReference type="Gene3D" id="3.30.1320.10">
    <property type="match status" value="1"/>
</dbReference>
<dbReference type="HAMAP" id="MF_00385">
    <property type="entry name" value="Ribosomal_bS16"/>
    <property type="match status" value="1"/>
</dbReference>
<dbReference type="InterPro" id="IPR000307">
    <property type="entry name" value="Ribosomal_bS16"/>
</dbReference>
<dbReference type="InterPro" id="IPR020592">
    <property type="entry name" value="Ribosomal_bS16_CS"/>
</dbReference>
<dbReference type="InterPro" id="IPR023803">
    <property type="entry name" value="Ribosomal_bS16_dom_sf"/>
</dbReference>
<dbReference type="NCBIfam" id="TIGR00002">
    <property type="entry name" value="S16"/>
    <property type="match status" value="1"/>
</dbReference>
<dbReference type="PANTHER" id="PTHR12919">
    <property type="entry name" value="30S RIBOSOMAL PROTEIN S16"/>
    <property type="match status" value="1"/>
</dbReference>
<dbReference type="PANTHER" id="PTHR12919:SF20">
    <property type="entry name" value="SMALL RIBOSOMAL SUBUNIT PROTEIN BS16M"/>
    <property type="match status" value="1"/>
</dbReference>
<dbReference type="Pfam" id="PF00886">
    <property type="entry name" value="Ribosomal_S16"/>
    <property type="match status" value="1"/>
</dbReference>
<dbReference type="SUPFAM" id="SSF54565">
    <property type="entry name" value="Ribosomal protein S16"/>
    <property type="match status" value="1"/>
</dbReference>
<dbReference type="PROSITE" id="PS00732">
    <property type="entry name" value="RIBOSOMAL_S16"/>
    <property type="match status" value="1"/>
</dbReference>
<name>RS16_PASMU</name>
<gene>
    <name evidence="1" type="primary">rpsP</name>
    <name type="ordered locus">PM1294.1</name>
</gene>
<accession>P58123</accession>
<feature type="chain" id="PRO_0000167220" description="Small ribosomal subunit protein bS16">
    <location>
        <begin position="1"/>
        <end position="82"/>
    </location>
</feature>
<sequence>MVTIRLSRGGAKKRPFYQIVVADSRSPRDGRFIERVGFFNPLATGNAERLRLDLDRVNAWVEKGASLSDRVSALVKEAQKAA</sequence>
<proteinExistence type="inferred from homology"/>
<reference key="1">
    <citation type="journal article" date="2001" name="Proc. Natl. Acad. Sci. U.S.A.">
        <title>Complete genomic sequence of Pasteurella multocida Pm70.</title>
        <authorList>
            <person name="May B.J."/>
            <person name="Zhang Q."/>
            <person name="Li L.L."/>
            <person name="Paustian M.L."/>
            <person name="Whittam T.S."/>
            <person name="Kapur V."/>
        </authorList>
    </citation>
    <scope>NUCLEOTIDE SEQUENCE [LARGE SCALE GENOMIC DNA]</scope>
    <source>
        <strain>Pm70</strain>
    </source>
</reference>